<feature type="chain" id="PRO_1000098175" description="6,7-dimethyl-8-ribityllumazine synthase">
    <location>
        <begin position="1"/>
        <end position="157"/>
    </location>
</feature>
<feature type="active site" description="Proton donor" evidence="1">
    <location>
        <position position="89"/>
    </location>
</feature>
<feature type="binding site" evidence="1">
    <location>
        <position position="22"/>
    </location>
    <ligand>
        <name>5-amino-6-(D-ribitylamino)uracil</name>
        <dbReference type="ChEBI" id="CHEBI:15934"/>
    </ligand>
</feature>
<feature type="binding site" evidence="1">
    <location>
        <begin position="56"/>
        <end position="58"/>
    </location>
    <ligand>
        <name>5-amino-6-(D-ribitylamino)uracil</name>
        <dbReference type="ChEBI" id="CHEBI:15934"/>
    </ligand>
</feature>
<feature type="binding site" evidence="1">
    <location>
        <begin position="81"/>
        <end position="83"/>
    </location>
    <ligand>
        <name>5-amino-6-(D-ribitylamino)uracil</name>
        <dbReference type="ChEBI" id="CHEBI:15934"/>
    </ligand>
</feature>
<feature type="binding site" evidence="1">
    <location>
        <begin position="86"/>
        <end position="87"/>
    </location>
    <ligand>
        <name>(2S)-2-hydroxy-3-oxobutyl phosphate</name>
        <dbReference type="ChEBI" id="CHEBI:58830"/>
    </ligand>
</feature>
<feature type="binding site" evidence="1">
    <location>
        <position position="114"/>
    </location>
    <ligand>
        <name>5-amino-6-(D-ribitylamino)uracil</name>
        <dbReference type="ChEBI" id="CHEBI:15934"/>
    </ligand>
</feature>
<feature type="binding site" evidence="1">
    <location>
        <position position="128"/>
    </location>
    <ligand>
        <name>(2S)-2-hydroxy-3-oxobutyl phosphate</name>
        <dbReference type="ChEBI" id="CHEBI:58830"/>
    </ligand>
</feature>
<proteinExistence type="inferred from homology"/>
<evidence type="ECO:0000255" key="1">
    <source>
        <dbReference type="HAMAP-Rule" id="MF_00178"/>
    </source>
</evidence>
<accession>B0BAI7</accession>
<reference key="1">
    <citation type="journal article" date="2008" name="Genome Res.">
        <title>Chlamydia trachomatis: genome sequence analysis of lymphogranuloma venereum isolates.</title>
        <authorList>
            <person name="Thomson N.R."/>
            <person name="Holden M.T.G."/>
            <person name="Carder C."/>
            <person name="Lennard N."/>
            <person name="Lockey S.J."/>
            <person name="Marsh P."/>
            <person name="Skipp P."/>
            <person name="O'Connor C.D."/>
            <person name="Goodhead I."/>
            <person name="Norbertzcak H."/>
            <person name="Harris B."/>
            <person name="Ormond D."/>
            <person name="Rance R."/>
            <person name="Quail M.A."/>
            <person name="Parkhill J."/>
            <person name="Stephens R.S."/>
            <person name="Clarke I.N."/>
        </authorList>
    </citation>
    <scope>NUCLEOTIDE SEQUENCE [LARGE SCALE GENOMIC DNA]</scope>
    <source>
        <strain>UCH-1/proctitis</strain>
    </source>
</reference>
<dbReference type="EC" id="2.5.1.78" evidence="1"/>
<dbReference type="EMBL" id="AM884177">
    <property type="protein sequence ID" value="CAP06499.1"/>
    <property type="molecule type" value="Genomic_DNA"/>
</dbReference>
<dbReference type="RefSeq" id="WP_009872109.1">
    <property type="nucleotide sequence ID" value="NC_010280.2"/>
</dbReference>
<dbReference type="SMR" id="B0BAI7"/>
<dbReference type="KEGG" id="ctl:CTLon_0101"/>
<dbReference type="HOGENOM" id="CLU_089358_1_1_0"/>
<dbReference type="UniPathway" id="UPA00275">
    <property type="reaction ID" value="UER00404"/>
</dbReference>
<dbReference type="Proteomes" id="UP001154401">
    <property type="component" value="Chromosome"/>
</dbReference>
<dbReference type="GO" id="GO:0005829">
    <property type="term" value="C:cytosol"/>
    <property type="evidence" value="ECO:0007669"/>
    <property type="project" value="TreeGrafter"/>
</dbReference>
<dbReference type="GO" id="GO:0009349">
    <property type="term" value="C:riboflavin synthase complex"/>
    <property type="evidence" value="ECO:0007669"/>
    <property type="project" value="InterPro"/>
</dbReference>
<dbReference type="GO" id="GO:0000906">
    <property type="term" value="F:6,7-dimethyl-8-ribityllumazine synthase activity"/>
    <property type="evidence" value="ECO:0007669"/>
    <property type="project" value="UniProtKB-UniRule"/>
</dbReference>
<dbReference type="GO" id="GO:0009231">
    <property type="term" value="P:riboflavin biosynthetic process"/>
    <property type="evidence" value="ECO:0007669"/>
    <property type="project" value="UniProtKB-UniRule"/>
</dbReference>
<dbReference type="CDD" id="cd09209">
    <property type="entry name" value="Lumazine_synthase-I"/>
    <property type="match status" value="1"/>
</dbReference>
<dbReference type="Gene3D" id="3.40.50.960">
    <property type="entry name" value="Lumazine/riboflavin synthase"/>
    <property type="match status" value="1"/>
</dbReference>
<dbReference type="HAMAP" id="MF_00178">
    <property type="entry name" value="Lumazine_synth"/>
    <property type="match status" value="1"/>
</dbReference>
<dbReference type="InterPro" id="IPR034964">
    <property type="entry name" value="LS"/>
</dbReference>
<dbReference type="InterPro" id="IPR002180">
    <property type="entry name" value="LS/RS"/>
</dbReference>
<dbReference type="InterPro" id="IPR036467">
    <property type="entry name" value="LS/RS_sf"/>
</dbReference>
<dbReference type="NCBIfam" id="TIGR00114">
    <property type="entry name" value="lumazine-synth"/>
    <property type="match status" value="1"/>
</dbReference>
<dbReference type="PANTHER" id="PTHR21058:SF0">
    <property type="entry name" value="6,7-DIMETHYL-8-RIBITYLLUMAZINE SYNTHASE"/>
    <property type="match status" value="1"/>
</dbReference>
<dbReference type="PANTHER" id="PTHR21058">
    <property type="entry name" value="6,7-DIMETHYL-8-RIBITYLLUMAZINE SYNTHASE DMRL SYNTHASE LUMAZINE SYNTHASE"/>
    <property type="match status" value="1"/>
</dbReference>
<dbReference type="Pfam" id="PF00885">
    <property type="entry name" value="DMRL_synthase"/>
    <property type="match status" value="1"/>
</dbReference>
<dbReference type="SUPFAM" id="SSF52121">
    <property type="entry name" value="Lumazine synthase"/>
    <property type="match status" value="1"/>
</dbReference>
<organism>
    <name type="scientific">Chlamydia trachomatis serovar L2b (strain UCH-1/proctitis)</name>
    <dbReference type="NCBI Taxonomy" id="471473"/>
    <lineage>
        <taxon>Bacteria</taxon>
        <taxon>Pseudomonadati</taxon>
        <taxon>Chlamydiota</taxon>
        <taxon>Chlamydiia</taxon>
        <taxon>Chlamydiales</taxon>
        <taxon>Chlamydiaceae</taxon>
        <taxon>Chlamydia/Chlamydophila group</taxon>
        <taxon>Chlamydia</taxon>
    </lineage>
</organism>
<gene>
    <name evidence="1" type="primary">ribH</name>
    <name type="ordered locus">CTLon_0101</name>
</gene>
<name>RISB_CHLTB</name>
<protein>
    <recommendedName>
        <fullName evidence="1">6,7-dimethyl-8-ribityllumazine synthase</fullName>
        <shortName evidence="1">DMRL synthase</shortName>
        <shortName evidence="1">LS</shortName>
        <shortName evidence="1">Lumazine synthase</shortName>
        <ecNumber evidence="1">2.5.1.78</ecNumber>
    </recommendedName>
</protein>
<sequence>MKPLKGCPVAKDVRVAIVGSCFNSPIADRLVAGAQETFFDFGGDPSSLTIVRVPGAFEIPCAIKKLLSTSGQFHAVVACGVLIQGETSHYEHIADSVAAGVSRLSLDFCLPITFSVITAPNMEAAWERAGIKGPNLGASGMKTALEMASLFSLIGKE</sequence>
<keyword id="KW-0686">Riboflavin biosynthesis</keyword>
<keyword id="KW-0808">Transferase</keyword>
<comment type="function">
    <text evidence="1">Catalyzes the formation of 6,7-dimethyl-8-ribityllumazine by condensation of 5-amino-6-(D-ribitylamino)uracil with 3,4-dihydroxy-2-butanone 4-phosphate. This is the penultimate step in the biosynthesis of riboflavin.</text>
</comment>
<comment type="catalytic activity">
    <reaction evidence="1">
        <text>(2S)-2-hydroxy-3-oxobutyl phosphate + 5-amino-6-(D-ribitylamino)uracil = 6,7-dimethyl-8-(1-D-ribityl)lumazine + phosphate + 2 H2O + H(+)</text>
        <dbReference type="Rhea" id="RHEA:26152"/>
        <dbReference type="ChEBI" id="CHEBI:15377"/>
        <dbReference type="ChEBI" id="CHEBI:15378"/>
        <dbReference type="ChEBI" id="CHEBI:15934"/>
        <dbReference type="ChEBI" id="CHEBI:43474"/>
        <dbReference type="ChEBI" id="CHEBI:58201"/>
        <dbReference type="ChEBI" id="CHEBI:58830"/>
        <dbReference type="EC" id="2.5.1.78"/>
    </reaction>
</comment>
<comment type="pathway">
    <text evidence="1">Cofactor biosynthesis; riboflavin biosynthesis; riboflavin from 2-hydroxy-3-oxobutyl phosphate and 5-amino-6-(D-ribitylamino)uracil: step 1/2.</text>
</comment>
<comment type="similarity">
    <text evidence="1">Belongs to the DMRL synthase family.</text>
</comment>